<organism>
    <name type="scientific">Oceanobacillus iheyensis (strain DSM 14371 / CIP 107618 / JCM 11309 / KCTC 3954 / HTE831)</name>
    <dbReference type="NCBI Taxonomy" id="221109"/>
    <lineage>
        <taxon>Bacteria</taxon>
        <taxon>Bacillati</taxon>
        <taxon>Bacillota</taxon>
        <taxon>Bacilli</taxon>
        <taxon>Bacillales</taxon>
        <taxon>Bacillaceae</taxon>
        <taxon>Oceanobacillus</taxon>
    </lineage>
</organism>
<feature type="chain" id="PRO_0000177550" description="Translation initiation factor IF-3">
    <location>
        <begin position="1"/>
        <end position="172"/>
    </location>
</feature>
<gene>
    <name evidence="1" type="primary">infC</name>
    <name type="ordered locus">OB2152</name>
</gene>
<keyword id="KW-0963">Cytoplasm</keyword>
<keyword id="KW-0396">Initiation factor</keyword>
<keyword id="KW-0648">Protein biosynthesis</keyword>
<keyword id="KW-1185">Reference proteome</keyword>
<reference key="1">
    <citation type="journal article" date="2002" name="Nucleic Acids Res.">
        <title>Genome sequence of Oceanobacillus iheyensis isolated from the Iheya Ridge and its unexpected adaptive capabilities to extreme environments.</title>
        <authorList>
            <person name="Takami H."/>
            <person name="Takaki Y."/>
            <person name="Uchiyama I."/>
        </authorList>
    </citation>
    <scope>NUCLEOTIDE SEQUENCE [LARGE SCALE GENOMIC DNA]</scope>
    <source>
        <strain>DSM 14371 / CIP 107618 / JCM 11309 / KCTC 3954 / HTE831</strain>
    </source>
</reference>
<sequence>MSKDMNVNEKIRAREVRLIDSNGDQLGVKSRQEALDIATTRNLDLVLVAPNAKPPVCRIMDYGKYRFEQQKKEKEARKKQKVINVKEVRFTPGIGDHDFETKLKNARKFLEKGDKVKAAVRFRGRAITHKELGREVLDRFAEEVKDLGTIETKPKMEGRNMFMMVAPINEKN</sequence>
<accession>Q8EPF5</accession>
<evidence type="ECO:0000255" key="1">
    <source>
        <dbReference type="HAMAP-Rule" id="MF_00080"/>
    </source>
</evidence>
<evidence type="ECO:0000305" key="2"/>
<dbReference type="EMBL" id="BA000028">
    <property type="protein sequence ID" value="BAC14108.1"/>
    <property type="status" value="ALT_INIT"/>
    <property type="molecule type" value="Genomic_DNA"/>
</dbReference>
<dbReference type="RefSeq" id="WP_011066546.1">
    <property type="nucleotide sequence ID" value="NC_004193.1"/>
</dbReference>
<dbReference type="SMR" id="Q8EPF5"/>
<dbReference type="STRING" id="221109.gene:10734400"/>
<dbReference type="KEGG" id="oih:OB2152"/>
<dbReference type="eggNOG" id="COG0290">
    <property type="taxonomic scope" value="Bacteria"/>
</dbReference>
<dbReference type="HOGENOM" id="CLU_054919_3_2_9"/>
<dbReference type="OrthoDB" id="9806014at2"/>
<dbReference type="PhylomeDB" id="Q8EPF5"/>
<dbReference type="Proteomes" id="UP000000822">
    <property type="component" value="Chromosome"/>
</dbReference>
<dbReference type="GO" id="GO:0005829">
    <property type="term" value="C:cytosol"/>
    <property type="evidence" value="ECO:0007669"/>
    <property type="project" value="TreeGrafter"/>
</dbReference>
<dbReference type="GO" id="GO:0016020">
    <property type="term" value="C:membrane"/>
    <property type="evidence" value="ECO:0007669"/>
    <property type="project" value="TreeGrafter"/>
</dbReference>
<dbReference type="GO" id="GO:0043022">
    <property type="term" value="F:ribosome binding"/>
    <property type="evidence" value="ECO:0007669"/>
    <property type="project" value="TreeGrafter"/>
</dbReference>
<dbReference type="GO" id="GO:0003743">
    <property type="term" value="F:translation initiation factor activity"/>
    <property type="evidence" value="ECO:0007669"/>
    <property type="project" value="UniProtKB-UniRule"/>
</dbReference>
<dbReference type="GO" id="GO:0032790">
    <property type="term" value="P:ribosome disassembly"/>
    <property type="evidence" value="ECO:0007669"/>
    <property type="project" value="TreeGrafter"/>
</dbReference>
<dbReference type="FunFam" id="3.10.20.80:FF:000001">
    <property type="entry name" value="Translation initiation factor IF-3"/>
    <property type="match status" value="1"/>
</dbReference>
<dbReference type="FunFam" id="3.30.110.10:FF:000001">
    <property type="entry name" value="Translation initiation factor IF-3"/>
    <property type="match status" value="1"/>
</dbReference>
<dbReference type="Gene3D" id="3.30.110.10">
    <property type="entry name" value="Translation initiation factor 3 (IF-3), C-terminal domain"/>
    <property type="match status" value="1"/>
</dbReference>
<dbReference type="Gene3D" id="3.10.20.80">
    <property type="entry name" value="Translation initiation factor 3 (IF-3), N-terminal domain"/>
    <property type="match status" value="1"/>
</dbReference>
<dbReference type="HAMAP" id="MF_00080">
    <property type="entry name" value="IF_3"/>
    <property type="match status" value="1"/>
</dbReference>
<dbReference type="InterPro" id="IPR036788">
    <property type="entry name" value="T_IF-3_C_sf"/>
</dbReference>
<dbReference type="InterPro" id="IPR036787">
    <property type="entry name" value="T_IF-3_N_sf"/>
</dbReference>
<dbReference type="InterPro" id="IPR019813">
    <property type="entry name" value="Translation_initiation_fac3_CS"/>
</dbReference>
<dbReference type="InterPro" id="IPR001288">
    <property type="entry name" value="Translation_initiation_fac_3"/>
</dbReference>
<dbReference type="InterPro" id="IPR019815">
    <property type="entry name" value="Translation_initiation_fac_3_C"/>
</dbReference>
<dbReference type="InterPro" id="IPR019814">
    <property type="entry name" value="Translation_initiation_fac_3_N"/>
</dbReference>
<dbReference type="NCBIfam" id="TIGR00168">
    <property type="entry name" value="infC"/>
    <property type="match status" value="1"/>
</dbReference>
<dbReference type="PANTHER" id="PTHR10938">
    <property type="entry name" value="TRANSLATION INITIATION FACTOR IF-3"/>
    <property type="match status" value="1"/>
</dbReference>
<dbReference type="PANTHER" id="PTHR10938:SF0">
    <property type="entry name" value="TRANSLATION INITIATION FACTOR IF-3, MITOCHONDRIAL"/>
    <property type="match status" value="1"/>
</dbReference>
<dbReference type="Pfam" id="PF00707">
    <property type="entry name" value="IF3_C"/>
    <property type="match status" value="1"/>
</dbReference>
<dbReference type="Pfam" id="PF05198">
    <property type="entry name" value="IF3_N"/>
    <property type="match status" value="1"/>
</dbReference>
<dbReference type="SUPFAM" id="SSF55200">
    <property type="entry name" value="Translation initiation factor IF3, C-terminal domain"/>
    <property type="match status" value="1"/>
</dbReference>
<dbReference type="SUPFAM" id="SSF54364">
    <property type="entry name" value="Translation initiation factor IF3, N-terminal domain"/>
    <property type="match status" value="1"/>
</dbReference>
<dbReference type="PROSITE" id="PS00938">
    <property type="entry name" value="IF3"/>
    <property type="match status" value="1"/>
</dbReference>
<name>IF3_OCEIH</name>
<proteinExistence type="inferred from homology"/>
<comment type="function">
    <text evidence="1">IF-3 binds to the 30S ribosomal subunit and shifts the equilibrium between 70S ribosomes and their 50S and 30S subunits in favor of the free subunits, thus enhancing the availability of 30S subunits on which protein synthesis initiation begins.</text>
</comment>
<comment type="subunit">
    <text evidence="1">Monomer.</text>
</comment>
<comment type="subcellular location">
    <subcellularLocation>
        <location evidence="1">Cytoplasm</location>
    </subcellularLocation>
</comment>
<comment type="similarity">
    <text evidence="1">Belongs to the IF-3 family.</text>
</comment>
<comment type="sequence caution" evidence="2">
    <conflict type="erroneous initiation">
        <sequence resource="EMBL-CDS" id="BAC14108"/>
    </conflict>
</comment>
<protein>
    <recommendedName>
        <fullName evidence="1">Translation initiation factor IF-3</fullName>
    </recommendedName>
</protein>